<reference key="1">
    <citation type="journal article" date="2001" name="Nature">
        <title>Genome sequence of enterohaemorrhagic Escherichia coli O157:H7.</title>
        <authorList>
            <person name="Perna N.T."/>
            <person name="Plunkett G. III"/>
            <person name="Burland V."/>
            <person name="Mau B."/>
            <person name="Glasner J.D."/>
            <person name="Rose D.J."/>
            <person name="Mayhew G.F."/>
            <person name="Evans P.S."/>
            <person name="Gregor J."/>
            <person name="Kirkpatrick H.A."/>
            <person name="Posfai G."/>
            <person name="Hackett J."/>
            <person name="Klink S."/>
            <person name="Boutin A."/>
            <person name="Shao Y."/>
            <person name="Miller L."/>
            <person name="Grotbeck E.J."/>
            <person name="Davis N.W."/>
            <person name="Lim A."/>
            <person name="Dimalanta E.T."/>
            <person name="Potamousis K."/>
            <person name="Apodaca J."/>
            <person name="Anantharaman T.S."/>
            <person name="Lin J."/>
            <person name="Yen G."/>
            <person name="Schwartz D.C."/>
            <person name="Welch R.A."/>
            <person name="Blattner F.R."/>
        </authorList>
    </citation>
    <scope>NUCLEOTIDE SEQUENCE [LARGE SCALE GENOMIC DNA]</scope>
    <source>
        <strain>O157:H7 / EDL933 / ATCC 700927 / EHEC</strain>
    </source>
</reference>
<reference key="2">
    <citation type="journal article" date="2001" name="DNA Res.">
        <title>Complete genome sequence of enterohemorrhagic Escherichia coli O157:H7 and genomic comparison with a laboratory strain K-12.</title>
        <authorList>
            <person name="Hayashi T."/>
            <person name="Makino K."/>
            <person name="Ohnishi M."/>
            <person name="Kurokawa K."/>
            <person name="Ishii K."/>
            <person name="Yokoyama K."/>
            <person name="Han C.-G."/>
            <person name="Ohtsubo E."/>
            <person name="Nakayama K."/>
            <person name="Murata T."/>
            <person name="Tanaka M."/>
            <person name="Tobe T."/>
            <person name="Iida T."/>
            <person name="Takami H."/>
            <person name="Honda T."/>
            <person name="Sasakawa C."/>
            <person name="Ogasawara N."/>
            <person name="Yasunaga T."/>
            <person name="Kuhara S."/>
            <person name="Shiba T."/>
            <person name="Hattori M."/>
            <person name="Shinagawa H."/>
        </authorList>
    </citation>
    <scope>NUCLEOTIDE SEQUENCE [LARGE SCALE GENOMIC DNA]</scope>
    <source>
        <strain>O157:H7 / Sakai / RIMD 0509952 / EHEC</strain>
    </source>
</reference>
<proteinExistence type="inferred from homology"/>
<sequence>MLKTIQDKARHRTRPLWAWLKLLWQRIDEDNMTTLAGNLAYVSLLSLVPLVAVVFALFAAFPMFSDVSIQLRHFIFANFLPATGDVIQRYIEQFVANSNKMTAVGACGLIVTALLLMYSIDSALNTIWRSKRARPKIYSFAVYWMILTLGPLLAGASLAISSYLLSLRWASDLNTVIDNVLRIFPLLLSWISFWLLYSIVPTIRVPNRDAIVGAFVAALLFEAGKKGFALYITMFPSYQLIYGVLAVIPILFVWVYWTWCIVLLGAEITVTLGEYRKLKQAAEQEEDDEP</sequence>
<keyword id="KW-0997">Cell inner membrane</keyword>
<keyword id="KW-1003">Cell membrane</keyword>
<keyword id="KW-0472">Membrane</keyword>
<keyword id="KW-1185">Reference proteome</keyword>
<keyword id="KW-0812">Transmembrane</keyword>
<keyword id="KW-1133">Transmembrane helix</keyword>
<name>YIHY_ECO57</name>
<comment type="subcellular location">
    <subcellularLocation>
        <location evidence="2">Cell inner membrane</location>
        <topology evidence="2">Multi-pass membrane protein</topology>
    </subcellularLocation>
</comment>
<comment type="similarity">
    <text evidence="2">Belongs to the UPF0761 family.</text>
</comment>
<feature type="chain" id="PRO_0000200982" description="UPF0761 membrane protein YihY">
    <location>
        <begin position="1"/>
        <end position="290"/>
    </location>
</feature>
<feature type="topological domain" description="Cytoplasmic" evidence="1">
    <location>
        <begin position="1"/>
        <end position="43"/>
    </location>
</feature>
<feature type="transmembrane region" description="Helical" evidence="2">
    <location>
        <begin position="44"/>
        <end position="64"/>
    </location>
</feature>
<feature type="topological domain" description="Periplasmic" evidence="1">
    <location>
        <begin position="65"/>
        <end position="103"/>
    </location>
</feature>
<feature type="transmembrane region" description="Helical" evidence="2">
    <location>
        <begin position="104"/>
        <end position="124"/>
    </location>
</feature>
<feature type="topological domain" description="Cytoplasmic" evidence="1">
    <location>
        <begin position="125"/>
        <end position="139"/>
    </location>
</feature>
<feature type="transmembrane region" description="Helical" evidence="2">
    <location>
        <begin position="140"/>
        <end position="160"/>
    </location>
</feature>
<feature type="topological domain" description="Periplasmic" evidence="1">
    <location>
        <begin position="161"/>
        <end position="182"/>
    </location>
</feature>
<feature type="transmembrane region" description="Helical" evidence="2">
    <location>
        <begin position="183"/>
        <end position="203"/>
    </location>
</feature>
<feature type="topological domain" description="Cytoplasmic" evidence="1">
    <location>
        <begin position="204"/>
        <end position="209"/>
    </location>
</feature>
<feature type="transmembrane region" description="Helical" evidence="2">
    <location>
        <begin position="210"/>
        <end position="230"/>
    </location>
</feature>
<feature type="topological domain" description="Periplasmic" evidence="1">
    <location>
        <begin position="231"/>
        <end position="243"/>
    </location>
</feature>
<feature type="transmembrane region" description="Helical" evidence="2">
    <location>
        <begin position="244"/>
        <end position="264"/>
    </location>
</feature>
<feature type="topological domain" description="Cytoplasmic" evidence="1">
    <location>
        <begin position="265"/>
        <end position="290"/>
    </location>
</feature>
<accession>P0A8L0</accession>
<accession>P32146</accession>
<protein>
    <recommendedName>
        <fullName evidence="2">UPF0761 membrane protein YihY</fullName>
    </recommendedName>
</protein>
<organism>
    <name type="scientific">Escherichia coli O157:H7</name>
    <dbReference type="NCBI Taxonomy" id="83334"/>
    <lineage>
        <taxon>Bacteria</taxon>
        <taxon>Pseudomonadati</taxon>
        <taxon>Pseudomonadota</taxon>
        <taxon>Gammaproteobacteria</taxon>
        <taxon>Enterobacterales</taxon>
        <taxon>Enterobacteriaceae</taxon>
        <taxon>Escherichia</taxon>
    </lineage>
</organism>
<evidence type="ECO:0000255" key="1"/>
<evidence type="ECO:0000255" key="2">
    <source>
        <dbReference type="HAMAP-Rule" id="MF_00672"/>
    </source>
</evidence>
<dbReference type="EMBL" id="AE005174">
    <property type="protein sequence ID" value="AAG59076.1"/>
    <property type="molecule type" value="Genomic_DNA"/>
</dbReference>
<dbReference type="EMBL" id="BA000007">
    <property type="protein sequence ID" value="BAB38232.1"/>
    <property type="molecule type" value="Genomic_DNA"/>
</dbReference>
<dbReference type="PIR" id="A98230">
    <property type="entry name" value="A98230"/>
</dbReference>
<dbReference type="PIR" id="H86076">
    <property type="entry name" value="H86076"/>
</dbReference>
<dbReference type="RefSeq" id="NP_312836.1">
    <property type="nucleotide sequence ID" value="NC_002695.1"/>
</dbReference>
<dbReference type="RefSeq" id="WP_000920762.1">
    <property type="nucleotide sequence ID" value="NZ_VOAI01000016.1"/>
</dbReference>
<dbReference type="STRING" id="155864.Z5425"/>
<dbReference type="GeneID" id="915086"/>
<dbReference type="KEGG" id="ece:Z5425"/>
<dbReference type="KEGG" id="ecs:ECs_4809"/>
<dbReference type="PATRIC" id="fig|386585.9.peg.5024"/>
<dbReference type="eggNOG" id="COG1295">
    <property type="taxonomic scope" value="Bacteria"/>
</dbReference>
<dbReference type="HOGENOM" id="CLU_032288_0_0_6"/>
<dbReference type="OMA" id="KQPKFRW"/>
<dbReference type="Proteomes" id="UP000000558">
    <property type="component" value="Chromosome"/>
</dbReference>
<dbReference type="Proteomes" id="UP000002519">
    <property type="component" value="Chromosome"/>
</dbReference>
<dbReference type="GO" id="GO:0005886">
    <property type="term" value="C:plasma membrane"/>
    <property type="evidence" value="ECO:0007669"/>
    <property type="project" value="UniProtKB-SubCell"/>
</dbReference>
<dbReference type="HAMAP" id="MF_00672">
    <property type="entry name" value="UPF0761"/>
    <property type="match status" value="1"/>
</dbReference>
<dbReference type="InterPro" id="IPR023679">
    <property type="entry name" value="UPF0761_bac"/>
</dbReference>
<dbReference type="InterPro" id="IPR017039">
    <property type="entry name" value="Virul_fac_BrkB"/>
</dbReference>
<dbReference type="NCBIfam" id="NF002457">
    <property type="entry name" value="PRK01637.1"/>
    <property type="match status" value="1"/>
</dbReference>
<dbReference type="NCBIfam" id="TIGR00765">
    <property type="entry name" value="yihY_not_rbn"/>
    <property type="match status" value="1"/>
</dbReference>
<dbReference type="PANTHER" id="PTHR30213">
    <property type="entry name" value="INNER MEMBRANE PROTEIN YHJD"/>
    <property type="match status" value="1"/>
</dbReference>
<dbReference type="PANTHER" id="PTHR30213:SF0">
    <property type="entry name" value="UPF0761 MEMBRANE PROTEIN YIHY"/>
    <property type="match status" value="1"/>
</dbReference>
<dbReference type="Pfam" id="PF03631">
    <property type="entry name" value="Virul_fac_BrkB"/>
    <property type="match status" value="1"/>
</dbReference>
<dbReference type="PIRSF" id="PIRSF035875">
    <property type="entry name" value="RNase_BN"/>
    <property type="match status" value="1"/>
</dbReference>
<gene>
    <name evidence="2" type="primary">yihY</name>
    <name type="ordered locus">Z5425</name>
    <name type="ordered locus">ECs4809</name>
</gene>